<sequence length="336" mass="36740">MYYPFVRKALFQLDPERAHEFTFQQLRRITGTPLEALVRQKVPTKPVTCMGLTFKNPLGLAAGLDKDGECIDALGAMGFGSLEIGTVTPRPQPGNDKPRLFRLVDAEGLINRMGFNNLGVDNLVENVKKAHFDGILGINIGKNKDTPVENGKDDYLICMEKVYAYAGYIAINISSPNTPGLRTLQYGDALDDLLTAIKNKQNDLQAIHHKYVPVAVKIAPDLCEEELIQVADSLLRHNIDGVIATNTTLDRSLVQGMKNCQQTGGLSGRPLQLKSTEIIRRLSQELKGQLPIIGVGGIDSVIAAREKIAAGATLVQIYSGFIFKGPPLIKEIVTHI</sequence>
<protein>
    <recommendedName>
        <fullName evidence="1">Dihydroorotate dehydrogenase (quinone)</fullName>
        <ecNumber evidence="1">1.3.5.2</ecNumber>
    </recommendedName>
    <alternativeName>
        <fullName evidence="1">DHOdehase</fullName>
        <shortName evidence="1">DHOD</shortName>
        <shortName evidence="1">DHODase</shortName>
    </alternativeName>
    <alternativeName>
        <fullName evidence="1">Dihydroorotate oxidase</fullName>
    </alternativeName>
</protein>
<accession>B4TRW8</accession>
<proteinExistence type="inferred from homology"/>
<name>PYRD_SALSV</name>
<comment type="function">
    <text evidence="1">Catalyzes the conversion of dihydroorotate to orotate with quinone as electron acceptor.</text>
</comment>
<comment type="catalytic activity">
    <reaction evidence="1">
        <text>(S)-dihydroorotate + a quinone = orotate + a quinol</text>
        <dbReference type="Rhea" id="RHEA:30187"/>
        <dbReference type="ChEBI" id="CHEBI:24646"/>
        <dbReference type="ChEBI" id="CHEBI:30839"/>
        <dbReference type="ChEBI" id="CHEBI:30864"/>
        <dbReference type="ChEBI" id="CHEBI:132124"/>
        <dbReference type="EC" id="1.3.5.2"/>
    </reaction>
</comment>
<comment type="cofactor">
    <cofactor evidence="1">
        <name>FMN</name>
        <dbReference type="ChEBI" id="CHEBI:58210"/>
    </cofactor>
    <text evidence="1">Binds 1 FMN per subunit.</text>
</comment>
<comment type="pathway">
    <text evidence="1">Pyrimidine metabolism; UMP biosynthesis via de novo pathway; orotate from (S)-dihydroorotate (quinone route): step 1/1.</text>
</comment>
<comment type="subunit">
    <text evidence="1">Monomer.</text>
</comment>
<comment type="subcellular location">
    <subcellularLocation>
        <location evidence="1">Cell membrane</location>
        <topology evidence="1">Peripheral membrane protein</topology>
    </subcellularLocation>
</comment>
<comment type="similarity">
    <text evidence="1">Belongs to the dihydroorotate dehydrogenase family. Type 2 subfamily.</text>
</comment>
<keyword id="KW-1003">Cell membrane</keyword>
<keyword id="KW-0285">Flavoprotein</keyword>
<keyword id="KW-0288">FMN</keyword>
<keyword id="KW-0472">Membrane</keyword>
<keyword id="KW-0560">Oxidoreductase</keyword>
<keyword id="KW-0665">Pyrimidine biosynthesis</keyword>
<dbReference type="EC" id="1.3.5.2" evidence="1"/>
<dbReference type="EMBL" id="CP001127">
    <property type="protein sequence ID" value="ACF91940.1"/>
    <property type="molecule type" value="Genomic_DNA"/>
</dbReference>
<dbReference type="RefSeq" id="WP_000291723.1">
    <property type="nucleotide sequence ID" value="NC_011094.1"/>
</dbReference>
<dbReference type="SMR" id="B4TRW8"/>
<dbReference type="KEGG" id="sew:SeSA_A1120"/>
<dbReference type="HOGENOM" id="CLU_013640_2_0_6"/>
<dbReference type="UniPathway" id="UPA00070">
    <property type="reaction ID" value="UER00946"/>
</dbReference>
<dbReference type="Proteomes" id="UP000001865">
    <property type="component" value="Chromosome"/>
</dbReference>
<dbReference type="GO" id="GO:0005737">
    <property type="term" value="C:cytoplasm"/>
    <property type="evidence" value="ECO:0007669"/>
    <property type="project" value="InterPro"/>
</dbReference>
<dbReference type="GO" id="GO:0005886">
    <property type="term" value="C:plasma membrane"/>
    <property type="evidence" value="ECO:0007669"/>
    <property type="project" value="UniProtKB-SubCell"/>
</dbReference>
<dbReference type="GO" id="GO:0106430">
    <property type="term" value="F:dihydroorotate dehydrogenase (quinone) activity"/>
    <property type="evidence" value="ECO:0007669"/>
    <property type="project" value="UniProtKB-EC"/>
</dbReference>
<dbReference type="GO" id="GO:0006207">
    <property type="term" value="P:'de novo' pyrimidine nucleobase biosynthetic process"/>
    <property type="evidence" value="ECO:0007669"/>
    <property type="project" value="InterPro"/>
</dbReference>
<dbReference type="GO" id="GO:0044205">
    <property type="term" value="P:'de novo' UMP biosynthetic process"/>
    <property type="evidence" value="ECO:0007669"/>
    <property type="project" value="UniProtKB-UniRule"/>
</dbReference>
<dbReference type="CDD" id="cd04738">
    <property type="entry name" value="DHOD_2_like"/>
    <property type="match status" value="1"/>
</dbReference>
<dbReference type="FunFam" id="3.20.20.70:FF:000028">
    <property type="entry name" value="Dihydroorotate dehydrogenase (quinone)"/>
    <property type="match status" value="1"/>
</dbReference>
<dbReference type="Gene3D" id="3.20.20.70">
    <property type="entry name" value="Aldolase class I"/>
    <property type="match status" value="1"/>
</dbReference>
<dbReference type="HAMAP" id="MF_00225">
    <property type="entry name" value="DHO_dh_type2"/>
    <property type="match status" value="1"/>
</dbReference>
<dbReference type="InterPro" id="IPR013785">
    <property type="entry name" value="Aldolase_TIM"/>
</dbReference>
<dbReference type="InterPro" id="IPR050074">
    <property type="entry name" value="DHO_dehydrogenase"/>
</dbReference>
<dbReference type="InterPro" id="IPR012135">
    <property type="entry name" value="Dihydroorotate_DH_1_2"/>
</dbReference>
<dbReference type="InterPro" id="IPR005719">
    <property type="entry name" value="Dihydroorotate_DH_2"/>
</dbReference>
<dbReference type="InterPro" id="IPR005720">
    <property type="entry name" value="Dihydroorotate_DH_cat"/>
</dbReference>
<dbReference type="InterPro" id="IPR001295">
    <property type="entry name" value="Dihydroorotate_DH_CS"/>
</dbReference>
<dbReference type="NCBIfam" id="NF003644">
    <property type="entry name" value="PRK05286.1-1"/>
    <property type="match status" value="1"/>
</dbReference>
<dbReference type="NCBIfam" id="NF003645">
    <property type="entry name" value="PRK05286.1-2"/>
    <property type="match status" value="1"/>
</dbReference>
<dbReference type="NCBIfam" id="NF003646">
    <property type="entry name" value="PRK05286.1-4"/>
    <property type="match status" value="1"/>
</dbReference>
<dbReference type="NCBIfam" id="NF003652">
    <property type="entry name" value="PRK05286.2-5"/>
    <property type="match status" value="1"/>
</dbReference>
<dbReference type="NCBIfam" id="TIGR01036">
    <property type="entry name" value="pyrD_sub2"/>
    <property type="match status" value="1"/>
</dbReference>
<dbReference type="PANTHER" id="PTHR48109:SF4">
    <property type="entry name" value="DIHYDROOROTATE DEHYDROGENASE (QUINONE), MITOCHONDRIAL"/>
    <property type="match status" value="1"/>
</dbReference>
<dbReference type="PANTHER" id="PTHR48109">
    <property type="entry name" value="DIHYDROOROTATE DEHYDROGENASE (QUINONE), MITOCHONDRIAL-RELATED"/>
    <property type="match status" value="1"/>
</dbReference>
<dbReference type="Pfam" id="PF01180">
    <property type="entry name" value="DHO_dh"/>
    <property type="match status" value="1"/>
</dbReference>
<dbReference type="PIRSF" id="PIRSF000164">
    <property type="entry name" value="DHO_oxidase"/>
    <property type="match status" value="1"/>
</dbReference>
<dbReference type="SUPFAM" id="SSF51395">
    <property type="entry name" value="FMN-linked oxidoreductases"/>
    <property type="match status" value="1"/>
</dbReference>
<dbReference type="PROSITE" id="PS00911">
    <property type="entry name" value="DHODEHASE_1"/>
    <property type="match status" value="1"/>
</dbReference>
<dbReference type="PROSITE" id="PS00912">
    <property type="entry name" value="DHODEHASE_2"/>
    <property type="match status" value="1"/>
</dbReference>
<gene>
    <name evidence="1" type="primary">pyrD</name>
    <name type="ordered locus">SeSA_A1120</name>
</gene>
<organism>
    <name type="scientific">Salmonella schwarzengrund (strain CVM19633)</name>
    <dbReference type="NCBI Taxonomy" id="439843"/>
    <lineage>
        <taxon>Bacteria</taxon>
        <taxon>Pseudomonadati</taxon>
        <taxon>Pseudomonadota</taxon>
        <taxon>Gammaproteobacteria</taxon>
        <taxon>Enterobacterales</taxon>
        <taxon>Enterobacteriaceae</taxon>
        <taxon>Salmonella</taxon>
    </lineage>
</organism>
<evidence type="ECO:0000255" key="1">
    <source>
        <dbReference type="HAMAP-Rule" id="MF_00225"/>
    </source>
</evidence>
<feature type="chain" id="PRO_1000100288" description="Dihydroorotate dehydrogenase (quinone)">
    <location>
        <begin position="1"/>
        <end position="336"/>
    </location>
</feature>
<feature type="active site" description="Nucleophile" evidence="1">
    <location>
        <position position="175"/>
    </location>
</feature>
<feature type="binding site" evidence="1">
    <location>
        <begin position="62"/>
        <end position="66"/>
    </location>
    <ligand>
        <name>FMN</name>
        <dbReference type="ChEBI" id="CHEBI:58210"/>
    </ligand>
</feature>
<feature type="binding site" evidence="1">
    <location>
        <position position="66"/>
    </location>
    <ligand>
        <name>substrate</name>
    </ligand>
</feature>
<feature type="binding site" evidence="1">
    <location>
        <position position="86"/>
    </location>
    <ligand>
        <name>FMN</name>
        <dbReference type="ChEBI" id="CHEBI:58210"/>
    </ligand>
</feature>
<feature type="binding site" evidence="1">
    <location>
        <begin position="111"/>
        <end position="115"/>
    </location>
    <ligand>
        <name>substrate</name>
    </ligand>
</feature>
<feature type="binding site" evidence="1">
    <location>
        <position position="139"/>
    </location>
    <ligand>
        <name>FMN</name>
        <dbReference type="ChEBI" id="CHEBI:58210"/>
    </ligand>
</feature>
<feature type="binding site" evidence="1">
    <location>
        <position position="172"/>
    </location>
    <ligand>
        <name>FMN</name>
        <dbReference type="ChEBI" id="CHEBI:58210"/>
    </ligand>
</feature>
<feature type="binding site" evidence="1">
    <location>
        <position position="172"/>
    </location>
    <ligand>
        <name>substrate</name>
    </ligand>
</feature>
<feature type="binding site" evidence="1">
    <location>
        <position position="177"/>
    </location>
    <ligand>
        <name>substrate</name>
    </ligand>
</feature>
<feature type="binding site" evidence="1">
    <location>
        <position position="217"/>
    </location>
    <ligand>
        <name>FMN</name>
        <dbReference type="ChEBI" id="CHEBI:58210"/>
    </ligand>
</feature>
<feature type="binding site" evidence="1">
    <location>
        <position position="245"/>
    </location>
    <ligand>
        <name>FMN</name>
        <dbReference type="ChEBI" id="CHEBI:58210"/>
    </ligand>
</feature>
<feature type="binding site" evidence="1">
    <location>
        <begin position="246"/>
        <end position="247"/>
    </location>
    <ligand>
        <name>substrate</name>
    </ligand>
</feature>
<feature type="binding site" evidence="1">
    <location>
        <position position="268"/>
    </location>
    <ligand>
        <name>FMN</name>
        <dbReference type="ChEBI" id="CHEBI:58210"/>
    </ligand>
</feature>
<feature type="binding site" evidence="1">
    <location>
        <position position="297"/>
    </location>
    <ligand>
        <name>FMN</name>
        <dbReference type="ChEBI" id="CHEBI:58210"/>
    </ligand>
</feature>
<feature type="binding site" evidence="1">
    <location>
        <begin position="318"/>
        <end position="319"/>
    </location>
    <ligand>
        <name>FMN</name>
        <dbReference type="ChEBI" id="CHEBI:58210"/>
    </ligand>
</feature>
<reference key="1">
    <citation type="journal article" date="2011" name="J. Bacteriol.">
        <title>Comparative genomics of 28 Salmonella enterica isolates: evidence for CRISPR-mediated adaptive sublineage evolution.</title>
        <authorList>
            <person name="Fricke W.F."/>
            <person name="Mammel M.K."/>
            <person name="McDermott P.F."/>
            <person name="Tartera C."/>
            <person name="White D.G."/>
            <person name="Leclerc J.E."/>
            <person name="Ravel J."/>
            <person name="Cebula T.A."/>
        </authorList>
    </citation>
    <scope>NUCLEOTIDE SEQUENCE [LARGE SCALE GENOMIC DNA]</scope>
    <source>
        <strain>CVM19633</strain>
    </source>
</reference>